<protein>
    <recommendedName>
        <fullName>Putative uncharacterized protein DDB_G0294382</fullName>
    </recommendedName>
</protein>
<dbReference type="EMBL" id="AAFI02000261">
    <property type="protein sequence ID" value="EAL60284.1"/>
    <property type="molecule type" value="Genomic_DNA"/>
</dbReference>
<dbReference type="RefSeq" id="XP_628697.1">
    <property type="nucleotide sequence ID" value="XM_628695.1"/>
</dbReference>
<dbReference type="PaxDb" id="44689-DDB0302623"/>
<dbReference type="EnsemblProtists" id="EAL60284">
    <property type="protein sequence ID" value="EAL60284"/>
    <property type="gene ID" value="DDB_G0294382"/>
</dbReference>
<dbReference type="GeneID" id="3385361"/>
<dbReference type="KEGG" id="ddi:DDB_G0294382"/>
<dbReference type="dictyBase" id="DDB_G0294382"/>
<dbReference type="HOGENOM" id="CLU_3369494_0_0_1"/>
<dbReference type="InParanoid" id="Q54AK5"/>
<dbReference type="PRO" id="PR:Q54AK5"/>
<dbReference type="Proteomes" id="UP000002195">
    <property type="component" value="Unassembled WGS sequence"/>
</dbReference>
<proteinExistence type="predicted"/>
<gene>
    <name type="ORF">DDB_G0294382</name>
</gene>
<feature type="chain" id="PRO_0000343913" description="Putative uncharacterized protein DDB_G0294382">
    <location>
        <begin position="1"/>
        <end position="35"/>
    </location>
</feature>
<feature type="region of interest" description="Disordered" evidence="1">
    <location>
        <begin position="1"/>
        <end position="35"/>
    </location>
</feature>
<feature type="compositionally biased region" description="Low complexity" evidence="1">
    <location>
        <begin position="1"/>
        <end position="27"/>
    </location>
</feature>
<sequence length="35" mass="4191">MDQNEANIYNENNENNENNENENCQNEPIRIKIII</sequence>
<organism>
    <name type="scientific">Dictyostelium discoideum</name>
    <name type="common">Social amoeba</name>
    <dbReference type="NCBI Taxonomy" id="44689"/>
    <lineage>
        <taxon>Eukaryota</taxon>
        <taxon>Amoebozoa</taxon>
        <taxon>Evosea</taxon>
        <taxon>Eumycetozoa</taxon>
        <taxon>Dictyostelia</taxon>
        <taxon>Dictyosteliales</taxon>
        <taxon>Dictyosteliaceae</taxon>
        <taxon>Dictyostelium</taxon>
    </lineage>
</organism>
<accession>Q54AK5</accession>
<reference key="1">
    <citation type="journal article" date="2005" name="Nature">
        <title>The genome of the social amoeba Dictyostelium discoideum.</title>
        <authorList>
            <person name="Eichinger L."/>
            <person name="Pachebat J.A."/>
            <person name="Gloeckner G."/>
            <person name="Rajandream M.A."/>
            <person name="Sucgang R."/>
            <person name="Berriman M."/>
            <person name="Song J."/>
            <person name="Olsen R."/>
            <person name="Szafranski K."/>
            <person name="Xu Q."/>
            <person name="Tunggal B."/>
            <person name="Kummerfeld S."/>
            <person name="Madera M."/>
            <person name="Konfortov B.A."/>
            <person name="Rivero F."/>
            <person name="Bankier A.T."/>
            <person name="Lehmann R."/>
            <person name="Hamlin N."/>
            <person name="Davies R."/>
            <person name="Gaudet P."/>
            <person name="Fey P."/>
            <person name="Pilcher K."/>
            <person name="Chen G."/>
            <person name="Saunders D."/>
            <person name="Sodergren E.J."/>
            <person name="Davis P."/>
            <person name="Kerhornou A."/>
            <person name="Nie X."/>
            <person name="Hall N."/>
            <person name="Anjard C."/>
            <person name="Hemphill L."/>
            <person name="Bason N."/>
            <person name="Farbrother P."/>
            <person name="Desany B."/>
            <person name="Just E."/>
            <person name="Morio T."/>
            <person name="Rost R."/>
            <person name="Churcher C.M."/>
            <person name="Cooper J."/>
            <person name="Haydock S."/>
            <person name="van Driessche N."/>
            <person name="Cronin A."/>
            <person name="Goodhead I."/>
            <person name="Muzny D.M."/>
            <person name="Mourier T."/>
            <person name="Pain A."/>
            <person name="Lu M."/>
            <person name="Harper D."/>
            <person name="Lindsay R."/>
            <person name="Hauser H."/>
            <person name="James K.D."/>
            <person name="Quiles M."/>
            <person name="Madan Babu M."/>
            <person name="Saito T."/>
            <person name="Buchrieser C."/>
            <person name="Wardroper A."/>
            <person name="Felder M."/>
            <person name="Thangavelu M."/>
            <person name="Johnson D."/>
            <person name="Knights A."/>
            <person name="Loulseged H."/>
            <person name="Mungall K.L."/>
            <person name="Oliver K."/>
            <person name="Price C."/>
            <person name="Quail M.A."/>
            <person name="Urushihara H."/>
            <person name="Hernandez J."/>
            <person name="Rabbinowitsch E."/>
            <person name="Steffen D."/>
            <person name="Sanders M."/>
            <person name="Ma J."/>
            <person name="Kohara Y."/>
            <person name="Sharp S."/>
            <person name="Simmonds M.N."/>
            <person name="Spiegler S."/>
            <person name="Tivey A."/>
            <person name="Sugano S."/>
            <person name="White B."/>
            <person name="Walker D."/>
            <person name="Woodward J.R."/>
            <person name="Winckler T."/>
            <person name="Tanaka Y."/>
            <person name="Shaulsky G."/>
            <person name="Schleicher M."/>
            <person name="Weinstock G.M."/>
            <person name="Rosenthal A."/>
            <person name="Cox E.C."/>
            <person name="Chisholm R.L."/>
            <person name="Gibbs R.A."/>
            <person name="Loomis W.F."/>
            <person name="Platzer M."/>
            <person name="Kay R.R."/>
            <person name="Williams J.G."/>
            <person name="Dear P.H."/>
            <person name="Noegel A.A."/>
            <person name="Barrell B.G."/>
            <person name="Kuspa A."/>
        </authorList>
    </citation>
    <scope>NUCLEOTIDE SEQUENCE [LARGE SCALE GENOMIC DNA]</scope>
    <source>
        <strain>AX4</strain>
    </source>
</reference>
<name>Y0067_DICDI</name>
<keyword id="KW-1185">Reference proteome</keyword>
<evidence type="ECO:0000256" key="1">
    <source>
        <dbReference type="SAM" id="MobiDB-lite"/>
    </source>
</evidence>